<reference key="1">
    <citation type="submission" date="2006-03" db="EMBL/GenBank/DDBJ databases">
        <title>The NIAID influenza genome sequencing project.</title>
        <authorList>
            <person name="Ghedin E."/>
            <person name="Spiro D."/>
            <person name="Miller N."/>
            <person name="Zaborsky J."/>
            <person name="Feldblyum T."/>
            <person name="Subbu V."/>
            <person name="Shumway M."/>
            <person name="Sparenborg J."/>
            <person name="Groveman L."/>
            <person name="Halpin R."/>
            <person name="Sitz J."/>
            <person name="Koo H."/>
            <person name="Salzberg S.L."/>
            <person name="Webster R.G."/>
            <person name="Hoffmann E."/>
            <person name="Krauss S."/>
            <person name="Naeve C."/>
            <person name="Bao Y."/>
            <person name="Bolotov P."/>
            <person name="Dernovoy D."/>
            <person name="Kiryutin B."/>
            <person name="Lipman D.J."/>
            <person name="Tatusova T."/>
        </authorList>
    </citation>
    <scope>NUCLEOTIDE SEQUENCE [GENOMIC RNA]</scope>
    <source>
        <strain>A/WSN/1933</strain>
        <strain>A/WSN/1933 TS61</strain>
    </source>
</reference>
<organism>
    <name type="scientific">Influenza A virus (strain A/Wilson-Smith/1933 H1N1)</name>
    <name type="common">Influenza A virus (strain A/WS/1933 H1N1)</name>
    <dbReference type="NCBI Taxonomy" id="381518"/>
    <lineage>
        <taxon>Viruses</taxon>
        <taxon>Riboviria</taxon>
        <taxon>Orthornavirae</taxon>
        <taxon>Negarnaviricota</taxon>
        <taxon>Polyploviricotina</taxon>
        <taxon>Insthoviricetes</taxon>
        <taxon>Articulavirales</taxon>
        <taxon>Orthomyxoviridae</taxon>
        <taxon>Alphainfluenzavirus</taxon>
        <taxon>Alphainfluenzavirus influenzae</taxon>
        <taxon>Influenza A virus</taxon>
    </lineage>
</organism>
<organismHost>
    <name type="scientific">Aves</name>
    <dbReference type="NCBI Taxonomy" id="8782"/>
</organismHost>
<organismHost>
    <name type="scientific">Homo sapiens</name>
    <name type="common">Human</name>
    <dbReference type="NCBI Taxonomy" id="9606"/>
</organismHost>
<organismHost>
    <name type="scientific">Sus scrofa</name>
    <name type="common">Pig</name>
    <dbReference type="NCBI Taxonomy" id="9823"/>
</organismHost>
<protein>
    <recommendedName>
        <fullName evidence="1">Protein PB1-F2</fullName>
    </recommendedName>
</protein>
<proteinExistence type="inferred from homology"/>
<sequence>MGQEQDTPWILSTGHISTQKGEDGQQTPKLEHRNSTRLMGHCQKTMNQVVMPKQIVYWKQWPSLRNPILVSLKTRVLKRWRLFSKHEWTS</sequence>
<evidence type="ECO:0000255" key="1">
    <source>
        <dbReference type="HAMAP-Rule" id="MF_04064"/>
    </source>
</evidence>
<evidence type="ECO:0000256" key="2">
    <source>
        <dbReference type="SAM" id="MobiDB-lite"/>
    </source>
</evidence>
<name>PB1F2_I33A0</name>
<keyword id="KW-0053">Apoptosis</keyword>
<keyword id="KW-1035">Host cytoplasm</keyword>
<keyword id="KW-1043">Host membrane</keyword>
<keyword id="KW-1045">Host mitochondrion</keyword>
<keyword id="KW-1046">Host mitochondrion inner membrane</keyword>
<keyword id="KW-1048">Host nucleus</keyword>
<keyword id="KW-0945">Host-virus interaction</keyword>
<keyword id="KW-1090">Inhibition of host innate immune response by virus</keyword>
<keyword id="KW-1097">Inhibition of host MAVS by virus</keyword>
<keyword id="KW-1113">Inhibition of host RLR pathway by virus</keyword>
<keyword id="KW-0472">Membrane</keyword>
<keyword id="KW-1119">Modulation of host cell apoptosis by virus</keyword>
<keyword id="KW-0899">Viral immunoevasion</keyword>
<dbReference type="EMBL" id="CY009610">
    <property type="protein sequence ID" value="ABD77805.1"/>
    <property type="molecule type" value="Genomic_RNA"/>
</dbReference>
<dbReference type="EMBL" id="CY010794">
    <property type="protein sequence ID" value="ABF47964.1"/>
    <property type="molecule type" value="Genomic_RNA"/>
</dbReference>
<dbReference type="BMRB" id="Q20MH0"/>
<dbReference type="SMR" id="Q20MH0"/>
<dbReference type="Proteomes" id="UP000131702">
    <property type="component" value="Genome"/>
</dbReference>
<dbReference type="Proteomes" id="UP000148454">
    <property type="component" value="Genome"/>
</dbReference>
<dbReference type="GO" id="GO:0044164">
    <property type="term" value="C:host cell cytosol"/>
    <property type="evidence" value="ECO:0007669"/>
    <property type="project" value="UniProtKB-SubCell"/>
</dbReference>
<dbReference type="GO" id="GO:0044192">
    <property type="term" value="C:host cell mitochondrial inner membrane"/>
    <property type="evidence" value="ECO:0007669"/>
    <property type="project" value="UniProtKB-SubCell"/>
</dbReference>
<dbReference type="GO" id="GO:0042025">
    <property type="term" value="C:host cell nucleus"/>
    <property type="evidence" value="ECO:0007669"/>
    <property type="project" value="UniProtKB-SubCell"/>
</dbReference>
<dbReference type="GO" id="GO:0016020">
    <property type="term" value="C:membrane"/>
    <property type="evidence" value="ECO:0007669"/>
    <property type="project" value="UniProtKB-UniRule"/>
</dbReference>
<dbReference type="GO" id="GO:0052150">
    <property type="term" value="P:symbiont-mediated perturbation of host apoptosis"/>
    <property type="evidence" value="ECO:0007669"/>
    <property type="project" value="UniProtKB-KW"/>
</dbReference>
<dbReference type="GO" id="GO:0039545">
    <property type="term" value="P:symbiont-mediated suppression of host cytoplasmic pattern recognition receptor signaling pathway via inhibition of MAVS activity"/>
    <property type="evidence" value="ECO:0000250"/>
    <property type="project" value="UniProtKB"/>
</dbReference>
<dbReference type="HAMAP" id="MF_04064">
    <property type="entry name" value="INFV_PB1F2"/>
    <property type="match status" value="1"/>
</dbReference>
<dbReference type="InterPro" id="IPR021045">
    <property type="entry name" value="Flu_proapoptotic_PB1-F2"/>
</dbReference>
<dbReference type="Pfam" id="PF11986">
    <property type="entry name" value="PB1-F2"/>
    <property type="match status" value="1"/>
</dbReference>
<accession>Q20MH0</accession>
<accession>Q1I2B0</accession>
<gene>
    <name evidence="1" type="primary">PB1</name>
</gene>
<comment type="function">
    <text evidence="1">Plays an important role in promoting lung pathology in both primary viral infection and secondary bacterial infection. Promotes alteration of mitochondrial morphology, dissipation of mitochondrial membrane potential, and cell death. Alternatively, inhibits the production of interferon in the infected cell at the level of host mitochondrial antiviral signaling MAVS. Its level of expression differs greatly depending on which cell type is infected, in a manner that is independent of the levels of expression of other viral proteins. Monocytic cells are more affected than epithelial cells. Seems to disable virus-infected monocytes or other host innate immune cells. During early stage of infection, predisposes the mitochondria to permeability transition through interaction with host SLC25A6/ANT3 and VDAC1. These proteins participate in the formation of the permeability transition pore complex (PTPC) responsible of the release of mitochondrial products that triggers apoptosis.</text>
</comment>
<comment type="subunit">
    <text evidence="1">Oligomer. Interacts with human SLC25A6/ANT3 and VDAC1. Interacts with host MAVS.</text>
</comment>
<comment type="subcellular location">
    <subcellularLocation>
        <location evidence="1">Host mitochondrion inner membrane</location>
    </subcellularLocation>
    <subcellularLocation>
        <location evidence="1">Host nucleus</location>
    </subcellularLocation>
    <subcellularLocation>
        <location evidence="1">Host cytoplasm</location>
        <location evidence="1">Host cytosol</location>
    </subcellularLocation>
    <text evidence="1">Inner mitochondrial membrane in most cells types. Otherwise is detected in the nucleus and cytosol.</text>
</comment>
<comment type="miscellaneous">
    <text>Is not encoded in all strains, and seems to be dispensable for replication.</text>
</comment>
<comment type="similarity">
    <text evidence="1">Belongs to the influenza viruses PB1-F2 family.</text>
</comment>
<feature type="chain" id="PRO_0000278728" description="Protein PB1-F2">
    <location>
        <begin position="1"/>
        <end position="90"/>
    </location>
</feature>
<feature type="region of interest" description="Disordered" evidence="2">
    <location>
        <begin position="1"/>
        <end position="32"/>
    </location>
</feature>
<feature type="region of interest" description="Mitochondrial targeting sequence" evidence="1">
    <location>
        <begin position="65"/>
        <end position="87"/>
    </location>
</feature>
<feature type="compositionally biased region" description="Polar residues" evidence="2">
    <location>
        <begin position="14"/>
        <end position="28"/>
    </location>
</feature>
<feature type="site" description="Important for pathogenicity, S is highly pathogenic whereas N is low pathogenic">
    <location>
        <position position="66"/>
    </location>
</feature>
<feature type="site" description="Low pathogenicity" evidence="1">
    <location>
        <position position="66"/>
    </location>
</feature>
<feature type="sequence variant" description="In strain: A/WSN/1933 TS61.">
    <original>KT</original>
    <variation>RP</variation>
    <location>
        <begin position="73"/>
        <end position="74"/>
    </location>
</feature>